<accession>O35023</accession>
<name>SODF_BACSU</name>
<proteinExistence type="inferred from homology"/>
<keyword id="KW-0408">Iron</keyword>
<keyword id="KW-0479">Metal-binding</keyword>
<keyword id="KW-0560">Oxidoreductase</keyword>
<keyword id="KW-1185">Reference proteome</keyword>
<protein>
    <recommendedName>
        <fullName>Probable superoxide dismutase [Fe]</fullName>
        <ecNumber>1.15.1.1</ecNumber>
    </recommendedName>
</protein>
<feature type="chain" id="PRO_0000160112" description="Probable superoxide dismutase [Fe]">
    <location>
        <begin position="1"/>
        <end position="281"/>
    </location>
</feature>
<feature type="binding site" evidence="1">
    <location>
        <position position="104"/>
    </location>
    <ligand>
        <name>Fe cation</name>
        <dbReference type="ChEBI" id="CHEBI:24875"/>
    </ligand>
</feature>
<feature type="binding site" evidence="1">
    <location>
        <position position="152"/>
    </location>
    <ligand>
        <name>Fe cation</name>
        <dbReference type="ChEBI" id="CHEBI:24875"/>
    </ligand>
</feature>
<feature type="binding site" evidence="1">
    <location>
        <position position="236"/>
    </location>
    <ligand>
        <name>Fe cation</name>
        <dbReference type="ChEBI" id="CHEBI:24875"/>
    </ligand>
</feature>
<feature type="binding site" evidence="1">
    <location>
        <position position="240"/>
    </location>
    <ligand>
        <name>Fe cation</name>
        <dbReference type="ChEBI" id="CHEBI:24875"/>
    </ligand>
</feature>
<comment type="function">
    <text>Destroys superoxide anion radicals which are normally produced within the cells and which are toxic to biological systems.</text>
</comment>
<comment type="catalytic activity">
    <reaction>
        <text>2 superoxide + 2 H(+) = H2O2 + O2</text>
        <dbReference type="Rhea" id="RHEA:20696"/>
        <dbReference type="ChEBI" id="CHEBI:15378"/>
        <dbReference type="ChEBI" id="CHEBI:15379"/>
        <dbReference type="ChEBI" id="CHEBI:16240"/>
        <dbReference type="ChEBI" id="CHEBI:18421"/>
        <dbReference type="EC" id="1.15.1.1"/>
    </reaction>
</comment>
<comment type="cofactor">
    <cofactor evidence="1">
        <name>Fe cation</name>
        <dbReference type="ChEBI" id="CHEBI:24875"/>
    </cofactor>
    <text evidence="1">Binds 1 Fe cation per subunit.</text>
</comment>
<comment type="similarity">
    <text evidence="2">Belongs to the iron/manganese superoxide dismutase family.</text>
</comment>
<dbReference type="EC" id="1.15.1.1"/>
<dbReference type="EMBL" id="AF027868">
    <property type="protein sequence ID" value="AAB84442.1"/>
    <property type="molecule type" value="Genomic_DNA"/>
</dbReference>
<dbReference type="EMBL" id="AL009126">
    <property type="protein sequence ID" value="CAB13825.1"/>
    <property type="molecule type" value="Genomic_DNA"/>
</dbReference>
<dbReference type="PIR" id="C69709">
    <property type="entry name" value="C69709"/>
</dbReference>
<dbReference type="RefSeq" id="NP_389815.1">
    <property type="nucleotide sequence ID" value="NC_000964.3"/>
</dbReference>
<dbReference type="RefSeq" id="WP_004399227.1">
    <property type="nucleotide sequence ID" value="NZ_OZ025638.1"/>
</dbReference>
<dbReference type="SMR" id="O35023"/>
<dbReference type="FunCoup" id="O35023">
    <property type="interactions" value="19"/>
</dbReference>
<dbReference type="IntAct" id="O35023">
    <property type="interactions" value="1"/>
</dbReference>
<dbReference type="STRING" id="224308.BSU19330"/>
<dbReference type="PaxDb" id="224308-BSU19330"/>
<dbReference type="EnsemblBacteria" id="CAB13825">
    <property type="protein sequence ID" value="CAB13825"/>
    <property type="gene ID" value="BSU_19330"/>
</dbReference>
<dbReference type="GeneID" id="939503"/>
<dbReference type="KEGG" id="bsu:BSU19330"/>
<dbReference type="PATRIC" id="fig|224308.179.peg.2114"/>
<dbReference type="eggNOG" id="COG0605">
    <property type="taxonomic scope" value="Bacteria"/>
</dbReference>
<dbReference type="InParanoid" id="O35023"/>
<dbReference type="OrthoDB" id="9803125at2"/>
<dbReference type="PhylomeDB" id="O35023"/>
<dbReference type="BioCyc" id="BSUB:BSU19330-MONOMER"/>
<dbReference type="Proteomes" id="UP000001570">
    <property type="component" value="Chromosome"/>
</dbReference>
<dbReference type="GO" id="GO:0046872">
    <property type="term" value="F:metal ion binding"/>
    <property type="evidence" value="ECO:0007669"/>
    <property type="project" value="UniProtKB-KW"/>
</dbReference>
<dbReference type="GO" id="GO:0004784">
    <property type="term" value="F:superoxide dismutase activity"/>
    <property type="evidence" value="ECO:0007669"/>
    <property type="project" value="UniProtKB-EC"/>
</dbReference>
<dbReference type="FunFam" id="1.10.287.990:FF:000001">
    <property type="entry name" value="Superoxide dismutase"/>
    <property type="match status" value="1"/>
</dbReference>
<dbReference type="FunFam" id="3.55.40.20:FF:000004">
    <property type="entry name" value="Superoxide dismutase [Fe]"/>
    <property type="match status" value="1"/>
</dbReference>
<dbReference type="Gene3D" id="1.10.287.990">
    <property type="entry name" value="Fe,Mn superoxide dismutase (SOD) domain"/>
    <property type="match status" value="1"/>
</dbReference>
<dbReference type="Gene3D" id="3.55.40.20">
    <property type="entry name" value="Iron/manganese superoxide dismutase, C-terminal domain"/>
    <property type="match status" value="1"/>
</dbReference>
<dbReference type="InterPro" id="IPR050265">
    <property type="entry name" value="Fe/Mn_Superoxide_Dismutase"/>
</dbReference>
<dbReference type="InterPro" id="IPR001189">
    <property type="entry name" value="Mn/Fe_SOD"/>
</dbReference>
<dbReference type="InterPro" id="IPR019833">
    <property type="entry name" value="Mn/Fe_SOD_BS"/>
</dbReference>
<dbReference type="InterPro" id="IPR019832">
    <property type="entry name" value="Mn/Fe_SOD_C"/>
</dbReference>
<dbReference type="InterPro" id="IPR019831">
    <property type="entry name" value="Mn/Fe_SOD_N"/>
</dbReference>
<dbReference type="InterPro" id="IPR036324">
    <property type="entry name" value="Mn/Fe_SOD_N_sf"/>
</dbReference>
<dbReference type="InterPro" id="IPR036314">
    <property type="entry name" value="SOD_C_sf"/>
</dbReference>
<dbReference type="PANTHER" id="PTHR11404">
    <property type="entry name" value="SUPEROXIDE DISMUTASE 2"/>
    <property type="match status" value="1"/>
</dbReference>
<dbReference type="PANTHER" id="PTHR11404:SF6">
    <property type="entry name" value="SUPEROXIDE DISMUTASE [MN], MITOCHONDRIAL"/>
    <property type="match status" value="1"/>
</dbReference>
<dbReference type="Pfam" id="PF02777">
    <property type="entry name" value="Sod_Fe_C"/>
    <property type="match status" value="1"/>
</dbReference>
<dbReference type="Pfam" id="PF00081">
    <property type="entry name" value="Sod_Fe_N"/>
    <property type="match status" value="1"/>
</dbReference>
<dbReference type="PRINTS" id="PR01703">
    <property type="entry name" value="MNSODISMTASE"/>
</dbReference>
<dbReference type="SUPFAM" id="SSF54719">
    <property type="entry name" value="Fe,Mn superoxide dismutase (SOD), C-terminal domain"/>
    <property type="match status" value="1"/>
</dbReference>
<dbReference type="SUPFAM" id="SSF46609">
    <property type="entry name" value="Fe,Mn superoxide dismutase (SOD), N-terminal domain"/>
    <property type="match status" value="1"/>
</dbReference>
<dbReference type="PROSITE" id="PS00088">
    <property type="entry name" value="SOD_MN"/>
    <property type="match status" value="1"/>
</dbReference>
<reference key="1">
    <citation type="submission" date="1997-11" db="EMBL/GenBank/DDBJ databases">
        <title>Sequence analysis of the Bacillus subtilis chromosome region between the terC and odhAB loci cloned in a yeast artificial chromosome.</title>
        <authorList>
            <person name="Lapidus A."/>
            <person name="Galleron N."/>
            <person name="Sorokin A."/>
            <person name="Ehrlich S.D."/>
        </authorList>
    </citation>
    <scope>NUCLEOTIDE SEQUENCE [GENOMIC DNA]</scope>
</reference>
<reference key="2">
    <citation type="journal article" date="1997" name="Nature">
        <title>The complete genome sequence of the Gram-positive bacterium Bacillus subtilis.</title>
        <authorList>
            <person name="Kunst F."/>
            <person name="Ogasawara N."/>
            <person name="Moszer I."/>
            <person name="Albertini A.M."/>
            <person name="Alloni G."/>
            <person name="Azevedo V."/>
            <person name="Bertero M.G."/>
            <person name="Bessieres P."/>
            <person name="Bolotin A."/>
            <person name="Borchert S."/>
            <person name="Borriss R."/>
            <person name="Boursier L."/>
            <person name="Brans A."/>
            <person name="Braun M."/>
            <person name="Brignell S.C."/>
            <person name="Bron S."/>
            <person name="Brouillet S."/>
            <person name="Bruschi C.V."/>
            <person name="Caldwell B."/>
            <person name="Capuano V."/>
            <person name="Carter N.M."/>
            <person name="Choi S.-K."/>
            <person name="Codani J.-J."/>
            <person name="Connerton I.F."/>
            <person name="Cummings N.J."/>
            <person name="Daniel R.A."/>
            <person name="Denizot F."/>
            <person name="Devine K.M."/>
            <person name="Duesterhoeft A."/>
            <person name="Ehrlich S.D."/>
            <person name="Emmerson P.T."/>
            <person name="Entian K.-D."/>
            <person name="Errington J."/>
            <person name="Fabret C."/>
            <person name="Ferrari E."/>
            <person name="Foulger D."/>
            <person name="Fritz C."/>
            <person name="Fujita M."/>
            <person name="Fujita Y."/>
            <person name="Fuma S."/>
            <person name="Galizzi A."/>
            <person name="Galleron N."/>
            <person name="Ghim S.-Y."/>
            <person name="Glaser P."/>
            <person name="Goffeau A."/>
            <person name="Golightly E.J."/>
            <person name="Grandi G."/>
            <person name="Guiseppi G."/>
            <person name="Guy B.J."/>
            <person name="Haga K."/>
            <person name="Haiech J."/>
            <person name="Harwood C.R."/>
            <person name="Henaut A."/>
            <person name="Hilbert H."/>
            <person name="Holsappel S."/>
            <person name="Hosono S."/>
            <person name="Hullo M.-F."/>
            <person name="Itaya M."/>
            <person name="Jones L.-M."/>
            <person name="Joris B."/>
            <person name="Karamata D."/>
            <person name="Kasahara Y."/>
            <person name="Klaerr-Blanchard M."/>
            <person name="Klein C."/>
            <person name="Kobayashi Y."/>
            <person name="Koetter P."/>
            <person name="Koningstein G."/>
            <person name="Krogh S."/>
            <person name="Kumano M."/>
            <person name="Kurita K."/>
            <person name="Lapidus A."/>
            <person name="Lardinois S."/>
            <person name="Lauber J."/>
            <person name="Lazarevic V."/>
            <person name="Lee S.-M."/>
            <person name="Levine A."/>
            <person name="Liu H."/>
            <person name="Masuda S."/>
            <person name="Mauel C."/>
            <person name="Medigue C."/>
            <person name="Medina N."/>
            <person name="Mellado R.P."/>
            <person name="Mizuno M."/>
            <person name="Moestl D."/>
            <person name="Nakai S."/>
            <person name="Noback M."/>
            <person name="Noone D."/>
            <person name="O'Reilly M."/>
            <person name="Ogawa K."/>
            <person name="Ogiwara A."/>
            <person name="Oudega B."/>
            <person name="Park S.-H."/>
            <person name="Parro V."/>
            <person name="Pohl T.M."/>
            <person name="Portetelle D."/>
            <person name="Porwollik S."/>
            <person name="Prescott A.M."/>
            <person name="Presecan E."/>
            <person name="Pujic P."/>
            <person name="Purnelle B."/>
            <person name="Rapoport G."/>
            <person name="Rey M."/>
            <person name="Reynolds S."/>
            <person name="Rieger M."/>
            <person name="Rivolta C."/>
            <person name="Rocha E."/>
            <person name="Roche B."/>
            <person name="Rose M."/>
            <person name="Sadaie Y."/>
            <person name="Sato T."/>
            <person name="Scanlan E."/>
            <person name="Schleich S."/>
            <person name="Schroeter R."/>
            <person name="Scoffone F."/>
            <person name="Sekiguchi J."/>
            <person name="Sekowska A."/>
            <person name="Seror S.J."/>
            <person name="Serror P."/>
            <person name="Shin B.-S."/>
            <person name="Soldo B."/>
            <person name="Sorokin A."/>
            <person name="Tacconi E."/>
            <person name="Takagi T."/>
            <person name="Takahashi H."/>
            <person name="Takemaru K."/>
            <person name="Takeuchi M."/>
            <person name="Tamakoshi A."/>
            <person name="Tanaka T."/>
            <person name="Terpstra P."/>
            <person name="Tognoni A."/>
            <person name="Tosato V."/>
            <person name="Uchiyama S."/>
            <person name="Vandenbol M."/>
            <person name="Vannier F."/>
            <person name="Vassarotti A."/>
            <person name="Viari A."/>
            <person name="Wambutt R."/>
            <person name="Wedler E."/>
            <person name="Wedler H."/>
            <person name="Weitzenegger T."/>
            <person name="Winters P."/>
            <person name="Wipat A."/>
            <person name="Yamamoto H."/>
            <person name="Yamane K."/>
            <person name="Yasumoto K."/>
            <person name="Yata K."/>
            <person name="Yoshida K."/>
            <person name="Yoshikawa H.-F."/>
            <person name="Zumstein E."/>
            <person name="Yoshikawa H."/>
            <person name="Danchin A."/>
        </authorList>
    </citation>
    <scope>NUCLEOTIDE SEQUENCE [LARGE SCALE GENOMIC DNA]</scope>
    <source>
        <strain>168</strain>
    </source>
</reference>
<organism>
    <name type="scientific">Bacillus subtilis (strain 168)</name>
    <dbReference type="NCBI Taxonomy" id="224308"/>
    <lineage>
        <taxon>Bacteria</taxon>
        <taxon>Bacillati</taxon>
        <taxon>Bacillota</taxon>
        <taxon>Bacilli</taxon>
        <taxon>Bacillales</taxon>
        <taxon>Bacillaceae</taxon>
        <taxon>Bacillus</taxon>
    </lineage>
</organism>
<gene>
    <name type="primary">sodF</name>
    <name type="ordered locus">BSU19330</name>
</gene>
<evidence type="ECO:0000250" key="1"/>
<evidence type="ECO:0000305" key="2"/>
<sequence>MKRESYQAEMFNWCEALKDQIQKRGQLDQFEDQIDKMIEALEDDQTTEEDWYKQAAALYRDITESDDTSERRAYVPIGKHVLPKLPYKYSALEPYISRDIMILHHTKHHQSYVDGLNKAESELKKARATKNYDLITHWERELAFHGAGHYLHSIFWFSMHPNGKRRPTGALFQMIDLSFGSYSAFKEHFTQASKKVEGVGWAILVWAPRSGRLEILTAEKHQLFSQWDVIPLLPLDVWEHAYYLQYKNDRASYVDHWWNVVDWREAEKRFEQAKEVVWKLY</sequence>